<accession>P61573</accession>
<comment type="function">
    <text evidence="1">Retroviral replication requires the nuclear export and translation of unspliced, singly-spliced and multiply-spliced derivatives of the initial genomic transcript. Rec interacts with a highly structured RNA element (RcRE) present in the viral 3'LTR and recruits the cellular nuclear export machinery. This permits export to the cytoplasm of unspliced genomic or incompletely spliced subgenomic viral transcripts (By similarity).</text>
</comment>
<comment type="subunit">
    <text evidence="1">Forms homodimers, homotrimers, and homotetramers via a C-terminal domain. Associates with XPO1 and with ZNF145 (By similarity).</text>
</comment>
<comment type="subcellular location">
    <subcellularLocation>
        <location evidence="1">Cytoplasm</location>
    </subcellularLocation>
    <subcellularLocation>
        <location evidence="1">Nucleus</location>
        <location evidence="1">Nucleolus</location>
    </subcellularLocation>
    <text evidence="1">Shuttles between the nucleus and the cytoplasm. When in the nucleus, resides in the nucleolus (By similarity).</text>
</comment>
<comment type="miscellaneous">
    <text>Despite functional similarity, Rec shares almost no sequence homology with HIV-1 Rev and HTLV-1 Rex.</text>
</comment>
<comment type="miscellaneous">
    <text>This Rec protein is encoded by a human specific provirus.</text>
</comment>
<comment type="miscellaneous">
    <text>ERVK-9 has a type 2 genome. The HERV-K(HML-2) family contains type 1 and type 2 genomes depending on the absence or presence of 292 nucleotides at the 5'-end of the env gene. Rec proteins are translated from a doubly spliced transcript expressed exclusively by HERV-K(HML-2) type 2 proviral genomes. The first exon comprises the 87 N-terminal amino acids of the HERV-K(HMLM-2) type 2 envelope protein. The second exon (18 amino acids) is positioned in the 3' part of the proviral genome.</text>
</comment>
<name>REC9_HUMAN</name>
<organism>
    <name type="scientific">Homo sapiens</name>
    <name type="common">Human</name>
    <dbReference type="NCBI Taxonomy" id="9606"/>
    <lineage>
        <taxon>Eukaryota</taxon>
        <taxon>Metazoa</taxon>
        <taxon>Chordata</taxon>
        <taxon>Craniata</taxon>
        <taxon>Vertebrata</taxon>
        <taxon>Euteleostomi</taxon>
        <taxon>Mammalia</taxon>
        <taxon>Eutheria</taxon>
        <taxon>Euarchontoglires</taxon>
        <taxon>Primates</taxon>
        <taxon>Haplorrhini</taxon>
        <taxon>Catarrhini</taxon>
        <taxon>Hominidae</taxon>
        <taxon>Homo</taxon>
    </lineage>
</organism>
<sequence length="105" mass="11828">MNPSEMQRKAPPRRRRHRNRAPLTHKMNKMVTSEEQMKLPSTKKAEPPTWAQLKKLTQLATKYLENTKVTQTPESMLLAALMIVSMVSAGVPNSSEETATIENGP</sequence>
<feature type="chain" id="PRO_0000186777" description="Endogenous retrovirus group K member 9 Rec protein">
    <location>
        <begin position="1"/>
        <end position="105"/>
    </location>
</feature>
<feature type="region of interest" description="Disordered" evidence="3">
    <location>
        <begin position="1"/>
        <end position="49"/>
    </location>
</feature>
<feature type="short sequence motif" description="Nuclear localization signal" evidence="2">
    <location>
        <begin position="13"/>
        <end position="20"/>
    </location>
</feature>
<feature type="short sequence motif" description="Nuclear export signal" evidence="2">
    <location>
        <begin position="50"/>
        <end position="59"/>
    </location>
</feature>
<feature type="compositionally biased region" description="Basic residues" evidence="3">
    <location>
        <begin position="10"/>
        <end position="20"/>
    </location>
</feature>
<gene>
    <name type="primary">ERVK-9</name>
</gene>
<protein>
    <recommendedName>
        <fullName>Endogenous retrovirus group K member 9 Rec protein</fullName>
    </recommendedName>
    <alternativeName>
        <fullName>HERV-K(C6) Rec protein</fullName>
    </alternativeName>
    <alternativeName>
        <fullName>HERV-K109 Rec protein</fullName>
    </alternativeName>
    <alternativeName>
        <fullName>HERV-K_6q14.1 provirus Rec protein</fullName>
    </alternativeName>
</protein>
<proteinExistence type="evidence at protein level"/>
<keyword id="KW-0963">Cytoplasm</keyword>
<keyword id="KW-0895">ERV</keyword>
<keyword id="KW-0509">mRNA transport</keyword>
<keyword id="KW-0539">Nucleus</keyword>
<keyword id="KW-1185">Reference proteome</keyword>
<keyword id="KW-0694">RNA-binding</keyword>
<keyword id="KW-0813">Transport</keyword>
<keyword id="KW-0814">Transposable element</keyword>
<reference key="1">
    <citation type="journal article" date="2003" name="Nature">
        <title>The DNA sequence and analysis of human chromosome 6.</title>
        <authorList>
            <person name="Mungall A.J."/>
            <person name="Palmer S.A."/>
            <person name="Sims S.K."/>
            <person name="Edwards C.A."/>
            <person name="Ashurst J.L."/>
            <person name="Wilming L."/>
            <person name="Jones M.C."/>
            <person name="Horton R."/>
            <person name="Hunt S.E."/>
            <person name="Scott C.E."/>
            <person name="Gilbert J.G.R."/>
            <person name="Clamp M.E."/>
            <person name="Bethel G."/>
            <person name="Milne S."/>
            <person name="Ainscough R."/>
            <person name="Almeida J.P."/>
            <person name="Ambrose K.D."/>
            <person name="Andrews T.D."/>
            <person name="Ashwell R.I.S."/>
            <person name="Babbage A.K."/>
            <person name="Bagguley C.L."/>
            <person name="Bailey J."/>
            <person name="Banerjee R."/>
            <person name="Barker D.J."/>
            <person name="Barlow K.F."/>
            <person name="Bates K."/>
            <person name="Beare D.M."/>
            <person name="Beasley H."/>
            <person name="Beasley O."/>
            <person name="Bird C.P."/>
            <person name="Blakey S.E."/>
            <person name="Bray-Allen S."/>
            <person name="Brook J."/>
            <person name="Brown A.J."/>
            <person name="Brown J.Y."/>
            <person name="Burford D.C."/>
            <person name="Burrill W."/>
            <person name="Burton J."/>
            <person name="Carder C."/>
            <person name="Carter N.P."/>
            <person name="Chapman J.C."/>
            <person name="Clark S.Y."/>
            <person name="Clark G."/>
            <person name="Clee C.M."/>
            <person name="Clegg S."/>
            <person name="Cobley V."/>
            <person name="Collier R.E."/>
            <person name="Collins J.E."/>
            <person name="Colman L.K."/>
            <person name="Corby N.R."/>
            <person name="Coville G.J."/>
            <person name="Culley K.M."/>
            <person name="Dhami P."/>
            <person name="Davies J."/>
            <person name="Dunn M."/>
            <person name="Earthrowl M.E."/>
            <person name="Ellington A.E."/>
            <person name="Evans K.A."/>
            <person name="Faulkner L."/>
            <person name="Francis M.D."/>
            <person name="Frankish A."/>
            <person name="Frankland J."/>
            <person name="French L."/>
            <person name="Garner P."/>
            <person name="Garnett J."/>
            <person name="Ghori M.J."/>
            <person name="Gilby L.M."/>
            <person name="Gillson C.J."/>
            <person name="Glithero R.J."/>
            <person name="Grafham D.V."/>
            <person name="Grant M."/>
            <person name="Gribble S."/>
            <person name="Griffiths C."/>
            <person name="Griffiths M.N.D."/>
            <person name="Hall R."/>
            <person name="Halls K.S."/>
            <person name="Hammond S."/>
            <person name="Harley J.L."/>
            <person name="Hart E.A."/>
            <person name="Heath P.D."/>
            <person name="Heathcott R."/>
            <person name="Holmes S.J."/>
            <person name="Howden P.J."/>
            <person name="Howe K.L."/>
            <person name="Howell G.R."/>
            <person name="Huckle E."/>
            <person name="Humphray S.J."/>
            <person name="Humphries M.D."/>
            <person name="Hunt A.R."/>
            <person name="Johnson C.M."/>
            <person name="Joy A.A."/>
            <person name="Kay M."/>
            <person name="Keenan S.J."/>
            <person name="Kimberley A.M."/>
            <person name="King A."/>
            <person name="Laird G.K."/>
            <person name="Langford C."/>
            <person name="Lawlor S."/>
            <person name="Leongamornlert D.A."/>
            <person name="Leversha M."/>
            <person name="Lloyd C.R."/>
            <person name="Lloyd D.M."/>
            <person name="Loveland J.E."/>
            <person name="Lovell J."/>
            <person name="Martin S."/>
            <person name="Mashreghi-Mohammadi M."/>
            <person name="Maslen G.L."/>
            <person name="Matthews L."/>
            <person name="McCann O.T."/>
            <person name="McLaren S.J."/>
            <person name="McLay K."/>
            <person name="McMurray A."/>
            <person name="Moore M.J.F."/>
            <person name="Mullikin J.C."/>
            <person name="Niblett D."/>
            <person name="Nickerson T."/>
            <person name="Novik K.L."/>
            <person name="Oliver K."/>
            <person name="Overton-Larty E.K."/>
            <person name="Parker A."/>
            <person name="Patel R."/>
            <person name="Pearce A.V."/>
            <person name="Peck A.I."/>
            <person name="Phillimore B.J.C.T."/>
            <person name="Phillips S."/>
            <person name="Plumb R.W."/>
            <person name="Porter K.M."/>
            <person name="Ramsey Y."/>
            <person name="Ranby S.A."/>
            <person name="Rice C.M."/>
            <person name="Ross M.T."/>
            <person name="Searle S.M."/>
            <person name="Sehra H.K."/>
            <person name="Sheridan E."/>
            <person name="Skuce C.D."/>
            <person name="Smith S."/>
            <person name="Smith M."/>
            <person name="Spraggon L."/>
            <person name="Squares S.L."/>
            <person name="Steward C.A."/>
            <person name="Sycamore N."/>
            <person name="Tamlyn-Hall G."/>
            <person name="Tester J."/>
            <person name="Theaker A.J."/>
            <person name="Thomas D.W."/>
            <person name="Thorpe A."/>
            <person name="Tracey A."/>
            <person name="Tromans A."/>
            <person name="Tubby B."/>
            <person name="Wall M."/>
            <person name="Wallis J.M."/>
            <person name="West A.P."/>
            <person name="White S.S."/>
            <person name="Whitehead S.L."/>
            <person name="Whittaker H."/>
            <person name="Wild A."/>
            <person name="Willey D.J."/>
            <person name="Wilmer T.E."/>
            <person name="Wood J.M."/>
            <person name="Wray P.W."/>
            <person name="Wyatt J.C."/>
            <person name="Young L."/>
            <person name="Younger R.M."/>
            <person name="Bentley D.R."/>
            <person name="Coulson A."/>
            <person name="Durbin R.M."/>
            <person name="Hubbard T."/>
            <person name="Sulston J.E."/>
            <person name="Dunham I."/>
            <person name="Rogers J."/>
            <person name="Beck S."/>
        </authorList>
    </citation>
    <scope>NUCLEOTIDE SEQUENCE [LARGE SCALE GENOMIC DNA]</scope>
</reference>
<reference key="2">
    <citation type="journal article" date="1999" name="Curr. Biol.">
        <title>Many human endogenous retrovirus K (HERV-K) proviruses are unique to humans.</title>
        <authorList>
            <person name="Barbulescu M."/>
            <person name="Turner G."/>
            <person name="Seaman M.I."/>
            <person name="Deinard A.S."/>
            <person name="Kidd K.K."/>
            <person name="Lenz J."/>
        </authorList>
    </citation>
    <scope>NUCLEOTIDE SEQUENCE [GENOMIC DNA]</scope>
</reference>
<reference key="3">
    <citation type="journal article" date="2004" name="Virology">
        <title>Human endogenous retrovirus HERV-K(HML-2) proviruses with Rec protein coding capacity and transcriptional activity.</title>
        <authorList>
            <person name="Mayer J."/>
            <person name="Ehlhardt S."/>
            <person name="Seifert M."/>
            <person name="Sauter M."/>
            <person name="Mueller-Lantzsch N."/>
            <person name="Mehraein Y."/>
            <person name="Zang K.-D."/>
            <person name="Meese E.U."/>
        </authorList>
    </citation>
    <scope>CHARACTERIZATION</scope>
</reference>
<dbReference type="EMBL" id="AL590785">
    <property type="status" value="NOT_ANNOTATED_CDS"/>
    <property type="molecule type" value="Genomic_DNA"/>
</dbReference>
<dbReference type="EMBL" id="AF164615">
    <property type="status" value="NOT_ANNOTATED_CDS"/>
    <property type="molecule type" value="Genomic_DNA"/>
</dbReference>
<dbReference type="SMR" id="P61573"/>
<dbReference type="BioMuta" id="HGNC:39005"/>
<dbReference type="MassIVE" id="P61573"/>
<dbReference type="GeneCards" id="ERVK-9"/>
<dbReference type="HGNC" id="HGNC:39005">
    <property type="gene designation" value="ERVK-9"/>
</dbReference>
<dbReference type="neXtProt" id="NX_P61573"/>
<dbReference type="PhylomeDB" id="P61573"/>
<dbReference type="Pharos" id="P61573">
    <property type="development level" value="Tdark"/>
</dbReference>
<dbReference type="Proteomes" id="UP000005640">
    <property type="component" value="Unplaced"/>
</dbReference>
<dbReference type="GO" id="GO:0005737">
    <property type="term" value="C:cytoplasm"/>
    <property type="evidence" value="ECO:0007669"/>
    <property type="project" value="UniProtKB-SubCell"/>
</dbReference>
<dbReference type="GO" id="GO:0005730">
    <property type="term" value="C:nucleolus"/>
    <property type="evidence" value="ECO:0007669"/>
    <property type="project" value="UniProtKB-SubCell"/>
</dbReference>
<dbReference type="GO" id="GO:0003723">
    <property type="term" value="F:RNA binding"/>
    <property type="evidence" value="ECO:0007669"/>
    <property type="project" value="UniProtKB-KW"/>
</dbReference>
<dbReference type="GO" id="GO:0051028">
    <property type="term" value="P:mRNA transport"/>
    <property type="evidence" value="ECO:0007669"/>
    <property type="project" value="UniProtKB-KW"/>
</dbReference>
<dbReference type="Pfam" id="PF15695">
    <property type="entry name" value="HERV-K_REC"/>
    <property type="match status" value="1"/>
</dbReference>
<evidence type="ECO:0000250" key="1"/>
<evidence type="ECO:0000255" key="2"/>
<evidence type="ECO:0000256" key="3">
    <source>
        <dbReference type="SAM" id="MobiDB-lite"/>
    </source>
</evidence>